<organism>
    <name type="scientific">Schizosaccharomyces pombe (strain 972 / ATCC 24843)</name>
    <name type="common">Fission yeast</name>
    <dbReference type="NCBI Taxonomy" id="284812"/>
    <lineage>
        <taxon>Eukaryota</taxon>
        <taxon>Fungi</taxon>
        <taxon>Dikarya</taxon>
        <taxon>Ascomycota</taxon>
        <taxon>Taphrinomycotina</taxon>
        <taxon>Schizosaccharomycetes</taxon>
        <taxon>Schizosaccharomycetales</taxon>
        <taxon>Schizosaccharomycetaceae</taxon>
        <taxon>Schizosaccharomyces</taxon>
    </lineage>
</organism>
<comment type="function">
    <text>Essential for recycling GMP and indirectly, cGMP.</text>
</comment>
<comment type="catalytic activity">
    <reaction>
        <text>GMP + ATP = GDP + ADP</text>
        <dbReference type="Rhea" id="RHEA:20780"/>
        <dbReference type="ChEBI" id="CHEBI:30616"/>
        <dbReference type="ChEBI" id="CHEBI:58115"/>
        <dbReference type="ChEBI" id="CHEBI:58189"/>
        <dbReference type="ChEBI" id="CHEBI:456216"/>
        <dbReference type="EC" id="2.7.4.8"/>
    </reaction>
</comment>
<comment type="similarity">
    <text evidence="2">Belongs to the guanylate kinase family.</text>
</comment>
<keyword id="KW-0067">ATP-binding</keyword>
<keyword id="KW-0418">Kinase</keyword>
<keyword id="KW-0547">Nucleotide-binding</keyword>
<keyword id="KW-1185">Reference proteome</keyword>
<keyword id="KW-0808">Transferase</keyword>
<feature type="chain" id="PRO_0000170654" description="Guanylate kinase">
    <location>
        <begin position="1"/>
        <end position="202"/>
    </location>
</feature>
<feature type="domain" description="Guanylate kinase-like" evidence="1">
    <location>
        <begin position="18"/>
        <end position="200"/>
    </location>
</feature>
<feature type="binding site" evidence="1">
    <location>
        <begin position="25"/>
        <end position="32"/>
    </location>
    <ligand>
        <name>ATP</name>
        <dbReference type="ChEBI" id="CHEBI:30616"/>
    </ligand>
</feature>
<protein>
    <recommendedName>
        <fullName>Guanylate kinase</fullName>
        <ecNumber>2.7.4.8</ecNumber>
    </recommendedName>
    <alternativeName>
        <fullName>GMP kinase</fullName>
    </alternativeName>
</protein>
<name>KGUA_SCHPO</name>
<sequence>MTPQLSSSVASKLVTLKLKPVVVFGPSGVGKSTLLKRLLKDHGDKLGFSVSHTTRTPRAGEKDGIDYHFVTKEEFQKLVAEEKFVEWAVFSGNMYGTSIMAIQELEAVNKKAILDIDLQGVLQVKASPIDAQYVFLAPPSIEQLEVRLRGRGTENESAILQRLERARAEIEYSEKPGNFDALIVNDDVEKAYKQLEAICLSD</sequence>
<reference key="1">
    <citation type="journal article" date="2002" name="Nature">
        <title>The genome sequence of Schizosaccharomyces pombe.</title>
        <authorList>
            <person name="Wood V."/>
            <person name="Gwilliam R."/>
            <person name="Rajandream M.A."/>
            <person name="Lyne M.H."/>
            <person name="Lyne R."/>
            <person name="Stewart A."/>
            <person name="Sgouros J.G."/>
            <person name="Peat N."/>
            <person name="Hayles J."/>
            <person name="Baker S.G."/>
            <person name="Basham D."/>
            <person name="Bowman S."/>
            <person name="Brooks K."/>
            <person name="Brown D."/>
            <person name="Brown S."/>
            <person name="Chillingworth T."/>
            <person name="Churcher C.M."/>
            <person name="Collins M."/>
            <person name="Connor R."/>
            <person name="Cronin A."/>
            <person name="Davis P."/>
            <person name="Feltwell T."/>
            <person name="Fraser A."/>
            <person name="Gentles S."/>
            <person name="Goble A."/>
            <person name="Hamlin N."/>
            <person name="Harris D.E."/>
            <person name="Hidalgo J."/>
            <person name="Hodgson G."/>
            <person name="Holroyd S."/>
            <person name="Hornsby T."/>
            <person name="Howarth S."/>
            <person name="Huckle E.J."/>
            <person name="Hunt S."/>
            <person name="Jagels K."/>
            <person name="James K.D."/>
            <person name="Jones L."/>
            <person name="Jones M."/>
            <person name="Leather S."/>
            <person name="McDonald S."/>
            <person name="McLean J."/>
            <person name="Mooney P."/>
            <person name="Moule S."/>
            <person name="Mungall K.L."/>
            <person name="Murphy L.D."/>
            <person name="Niblett D."/>
            <person name="Odell C."/>
            <person name="Oliver K."/>
            <person name="O'Neil S."/>
            <person name="Pearson D."/>
            <person name="Quail M.A."/>
            <person name="Rabbinowitsch E."/>
            <person name="Rutherford K.M."/>
            <person name="Rutter S."/>
            <person name="Saunders D."/>
            <person name="Seeger K."/>
            <person name="Sharp S."/>
            <person name="Skelton J."/>
            <person name="Simmonds M.N."/>
            <person name="Squares R."/>
            <person name="Squares S."/>
            <person name="Stevens K."/>
            <person name="Taylor K."/>
            <person name="Taylor R.G."/>
            <person name="Tivey A."/>
            <person name="Walsh S.V."/>
            <person name="Warren T."/>
            <person name="Whitehead S."/>
            <person name="Woodward J.R."/>
            <person name="Volckaert G."/>
            <person name="Aert R."/>
            <person name="Robben J."/>
            <person name="Grymonprez B."/>
            <person name="Weltjens I."/>
            <person name="Vanstreels E."/>
            <person name="Rieger M."/>
            <person name="Schaefer M."/>
            <person name="Mueller-Auer S."/>
            <person name="Gabel C."/>
            <person name="Fuchs M."/>
            <person name="Duesterhoeft A."/>
            <person name="Fritzc C."/>
            <person name="Holzer E."/>
            <person name="Moestl D."/>
            <person name="Hilbert H."/>
            <person name="Borzym K."/>
            <person name="Langer I."/>
            <person name="Beck A."/>
            <person name="Lehrach H."/>
            <person name="Reinhardt R."/>
            <person name="Pohl T.M."/>
            <person name="Eger P."/>
            <person name="Zimmermann W."/>
            <person name="Wedler H."/>
            <person name="Wambutt R."/>
            <person name="Purnelle B."/>
            <person name="Goffeau A."/>
            <person name="Cadieu E."/>
            <person name="Dreano S."/>
            <person name="Gloux S."/>
            <person name="Lelaure V."/>
            <person name="Mottier S."/>
            <person name="Galibert F."/>
            <person name="Aves S.J."/>
            <person name="Xiang Z."/>
            <person name="Hunt C."/>
            <person name="Moore K."/>
            <person name="Hurst S.M."/>
            <person name="Lucas M."/>
            <person name="Rochet M."/>
            <person name="Gaillardin C."/>
            <person name="Tallada V.A."/>
            <person name="Garzon A."/>
            <person name="Thode G."/>
            <person name="Daga R.R."/>
            <person name="Cruzado L."/>
            <person name="Jimenez J."/>
            <person name="Sanchez M."/>
            <person name="del Rey F."/>
            <person name="Benito J."/>
            <person name="Dominguez A."/>
            <person name="Revuelta J.L."/>
            <person name="Moreno S."/>
            <person name="Armstrong J."/>
            <person name="Forsburg S.L."/>
            <person name="Cerutti L."/>
            <person name="Lowe T."/>
            <person name="McCombie W.R."/>
            <person name="Paulsen I."/>
            <person name="Potashkin J."/>
            <person name="Shpakovski G.V."/>
            <person name="Ussery D."/>
            <person name="Barrell B.G."/>
            <person name="Nurse P."/>
        </authorList>
    </citation>
    <scope>NUCLEOTIDE SEQUENCE [LARGE SCALE GENOMIC DNA]</scope>
    <source>
        <strain>972 / ATCC 24843</strain>
    </source>
</reference>
<dbReference type="EC" id="2.7.4.8"/>
<dbReference type="EMBL" id="CU329671">
    <property type="protein sequence ID" value="CAB91180.1"/>
    <property type="molecule type" value="Genomic_DNA"/>
</dbReference>
<dbReference type="SMR" id="Q9P6I5"/>
<dbReference type="FunCoup" id="Q9P6I5">
    <property type="interactions" value="503"/>
</dbReference>
<dbReference type="STRING" id="284812.Q9P6I5"/>
<dbReference type="iPTMnet" id="Q9P6I5"/>
<dbReference type="PaxDb" id="4896-SPBC1198.05.1"/>
<dbReference type="EnsemblFungi" id="SPBC1198.05.1">
    <property type="protein sequence ID" value="SPBC1198.05.1:pep"/>
    <property type="gene ID" value="SPBC1198.05"/>
</dbReference>
<dbReference type="KEGG" id="spo:2539674"/>
<dbReference type="PomBase" id="SPBC1198.05"/>
<dbReference type="VEuPathDB" id="FungiDB:SPBC1198.05"/>
<dbReference type="eggNOG" id="KOG0707">
    <property type="taxonomic scope" value="Eukaryota"/>
</dbReference>
<dbReference type="HOGENOM" id="CLU_001715_0_1_1"/>
<dbReference type="InParanoid" id="Q9P6I5"/>
<dbReference type="OMA" id="EWAVVHG"/>
<dbReference type="PhylomeDB" id="Q9P6I5"/>
<dbReference type="Reactome" id="R-SPO-499943">
    <property type="pathway name" value="Interconversion of nucleotide di- and triphosphates"/>
</dbReference>
<dbReference type="Reactome" id="R-SPO-9748787">
    <property type="pathway name" value="Azathioprine ADME"/>
</dbReference>
<dbReference type="PRO" id="PR:Q9P6I5"/>
<dbReference type="Proteomes" id="UP000002485">
    <property type="component" value="Chromosome II"/>
</dbReference>
<dbReference type="GO" id="GO:0005829">
    <property type="term" value="C:cytosol"/>
    <property type="evidence" value="ECO:0000318"/>
    <property type="project" value="GO_Central"/>
</dbReference>
<dbReference type="GO" id="GO:0005634">
    <property type="term" value="C:nucleus"/>
    <property type="evidence" value="ECO:0000266"/>
    <property type="project" value="PomBase"/>
</dbReference>
<dbReference type="GO" id="GO:0005524">
    <property type="term" value="F:ATP binding"/>
    <property type="evidence" value="ECO:0007669"/>
    <property type="project" value="UniProtKB-KW"/>
</dbReference>
<dbReference type="GO" id="GO:0004385">
    <property type="term" value="F:guanylate kinase activity"/>
    <property type="evidence" value="ECO:0000250"/>
    <property type="project" value="UniProtKB"/>
</dbReference>
<dbReference type="GO" id="GO:0006183">
    <property type="term" value="P:GTP biosynthetic process"/>
    <property type="evidence" value="ECO:0000305"/>
    <property type="project" value="PomBase"/>
</dbReference>
<dbReference type="GO" id="GO:0006163">
    <property type="term" value="P:purine nucleotide metabolic process"/>
    <property type="evidence" value="ECO:0000250"/>
    <property type="project" value="UniProtKB"/>
</dbReference>
<dbReference type="CDD" id="cd00071">
    <property type="entry name" value="GMPK"/>
    <property type="match status" value="1"/>
</dbReference>
<dbReference type="FunFam" id="3.30.63.10:FF:000002">
    <property type="entry name" value="Guanylate kinase 1"/>
    <property type="match status" value="1"/>
</dbReference>
<dbReference type="FunFam" id="3.40.50.300:FF:000776">
    <property type="entry name" value="Guanylate kinase 2"/>
    <property type="match status" value="1"/>
</dbReference>
<dbReference type="Gene3D" id="3.40.50.300">
    <property type="entry name" value="P-loop containing nucleotide triphosphate hydrolases"/>
    <property type="match status" value="1"/>
</dbReference>
<dbReference type="InterPro" id="IPR008145">
    <property type="entry name" value="GK/Ca_channel_bsu"/>
</dbReference>
<dbReference type="InterPro" id="IPR008144">
    <property type="entry name" value="Guanylate_kin-like_dom"/>
</dbReference>
<dbReference type="InterPro" id="IPR017665">
    <property type="entry name" value="Guanylate_kinase"/>
</dbReference>
<dbReference type="InterPro" id="IPR020590">
    <property type="entry name" value="Guanylate_kinase_CS"/>
</dbReference>
<dbReference type="InterPro" id="IPR027417">
    <property type="entry name" value="P-loop_NTPase"/>
</dbReference>
<dbReference type="NCBIfam" id="TIGR03263">
    <property type="entry name" value="guanyl_kin"/>
    <property type="match status" value="1"/>
</dbReference>
<dbReference type="PANTHER" id="PTHR23117:SF13">
    <property type="entry name" value="GUANYLATE KINASE"/>
    <property type="match status" value="1"/>
</dbReference>
<dbReference type="PANTHER" id="PTHR23117">
    <property type="entry name" value="GUANYLATE KINASE-RELATED"/>
    <property type="match status" value="1"/>
</dbReference>
<dbReference type="Pfam" id="PF00625">
    <property type="entry name" value="Guanylate_kin"/>
    <property type="match status" value="1"/>
</dbReference>
<dbReference type="SMART" id="SM00072">
    <property type="entry name" value="GuKc"/>
    <property type="match status" value="1"/>
</dbReference>
<dbReference type="SUPFAM" id="SSF52540">
    <property type="entry name" value="P-loop containing nucleoside triphosphate hydrolases"/>
    <property type="match status" value="1"/>
</dbReference>
<dbReference type="PROSITE" id="PS00856">
    <property type="entry name" value="GUANYLATE_KINASE_1"/>
    <property type="match status" value="1"/>
</dbReference>
<dbReference type="PROSITE" id="PS50052">
    <property type="entry name" value="GUANYLATE_KINASE_2"/>
    <property type="match status" value="1"/>
</dbReference>
<proteinExistence type="inferred from homology"/>
<gene>
    <name type="ORF">SPBC1198.05</name>
</gene>
<evidence type="ECO:0000255" key="1">
    <source>
        <dbReference type="PROSITE-ProRule" id="PRU00100"/>
    </source>
</evidence>
<evidence type="ECO:0000305" key="2"/>
<accession>Q9P6I5</accession>